<name>ACPS_STACT</name>
<evidence type="ECO:0000255" key="1">
    <source>
        <dbReference type="HAMAP-Rule" id="MF_00101"/>
    </source>
</evidence>
<accession>B9DMJ0</accession>
<comment type="function">
    <text evidence="1">Transfers the 4'-phosphopantetheine moiety from coenzyme A to a Ser of acyl-carrier-protein.</text>
</comment>
<comment type="catalytic activity">
    <reaction evidence="1">
        <text>apo-[ACP] + CoA = holo-[ACP] + adenosine 3',5'-bisphosphate + H(+)</text>
        <dbReference type="Rhea" id="RHEA:12068"/>
        <dbReference type="Rhea" id="RHEA-COMP:9685"/>
        <dbReference type="Rhea" id="RHEA-COMP:9690"/>
        <dbReference type="ChEBI" id="CHEBI:15378"/>
        <dbReference type="ChEBI" id="CHEBI:29999"/>
        <dbReference type="ChEBI" id="CHEBI:57287"/>
        <dbReference type="ChEBI" id="CHEBI:58343"/>
        <dbReference type="ChEBI" id="CHEBI:64479"/>
        <dbReference type="EC" id="2.7.8.7"/>
    </reaction>
</comment>
<comment type="cofactor">
    <cofactor evidence="1">
        <name>Mg(2+)</name>
        <dbReference type="ChEBI" id="CHEBI:18420"/>
    </cofactor>
</comment>
<comment type="subcellular location">
    <subcellularLocation>
        <location evidence="1">Cytoplasm</location>
    </subcellularLocation>
</comment>
<comment type="similarity">
    <text evidence="1">Belongs to the P-Pant transferase superfamily. AcpS family.</text>
</comment>
<proteinExistence type="inferred from homology"/>
<reference key="1">
    <citation type="journal article" date="2009" name="Appl. Environ. Microbiol.">
        <title>Genome analysis of the meat starter culture bacterium Staphylococcus carnosus TM300.</title>
        <authorList>
            <person name="Rosenstein R."/>
            <person name="Nerz C."/>
            <person name="Biswas L."/>
            <person name="Resch A."/>
            <person name="Raddatz G."/>
            <person name="Schuster S.C."/>
            <person name="Goetz F."/>
        </authorList>
    </citation>
    <scope>NUCLEOTIDE SEQUENCE [LARGE SCALE GENOMIC DNA]</scope>
    <source>
        <strain>TM300</strain>
    </source>
</reference>
<keyword id="KW-0963">Cytoplasm</keyword>
<keyword id="KW-0275">Fatty acid biosynthesis</keyword>
<keyword id="KW-0276">Fatty acid metabolism</keyword>
<keyword id="KW-0444">Lipid biosynthesis</keyword>
<keyword id="KW-0443">Lipid metabolism</keyword>
<keyword id="KW-0460">Magnesium</keyword>
<keyword id="KW-0479">Metal-binding</keyword>
<keyword id="KW-1185">Reference proteome</keyword>
<keyword id="KW-0808">Transferase</keyword>
<sequence>MIYGIGIDLIEIGRIKTLMERQKKLPERILSKDELTKFESFSHEQRRAEFLAGRFACKEAFSKALGTGLGKHVSFQDINCQNDELGRPYIRYEGFKVHVSITHTENYAASQVILEKM</sequence>
<organism>
    <name type="scientific">Staphylococcus carnosus (strain TM300)</name>
    <dbReference type="NCBI Taxonomy" id="396513"/>
    <lineage>
        <taxon>Bacteria</taxon>
        <taxon>Bacillati</taxon>
        <taxon>Bacillota</taxon>
        <taxon>Bacilli</taxon>
        <taxon>Bacillales</taxon>
        <taxon>Staphylococcaceae</taxon>
        <taxon>Staphylococcus</taxon>
    </lineage>
</organism>
<feature type="chain" id="PRO_1000118825" description="Holo-[acyl-carrier-protein] synthase">
    <location>
        <begin position="1"/>
        <end position="117"/>
    </location>
</feature>
<feature type="binding site" evidence="1">
    <location>
        <position position="8"/>
    </location>
    <ligand>
        <name>Mg(2+)</name>
        <dbReference type="ChEBI" id="CHEBI:18420"/>
    </ligand>
</feature>
<feature type="binding site" evidence="1">
    <location>
        <position position="59"/>
    </location>
    <ligand>
        <name>Mg(2+)</name>
        <dbReference type="ChEBI" id="CHEBI:18420"/>
    </ligand>
</feature>
<dbReference type="EC" id="2.7.8.7" evidence="1"/>
<dbReference type="EMBL" id="AM295250">
    <property type="protein sequence ID" value="CAL28482.1"/>
    <property type="molecule type" value="Genomic_DNA"/>
</dbReference>
<dbReference type="RefSeq" id="WP_015900822.1">
    <property type="nucleotide sequence ID" value="NC_012121.1"/>
</dbReference>
<dbReference type="SMR" id="B9DMJ0"/>
<dbReference type="GeneID" id="93794031"/>
<dbReference type="KEGG" id="sca:SCA_1577"/>
<dbReference type="eggNOG" id="COG0736">
    <property type="taxonomic scope" value="Bacteria"/>
</dbReference>
<dbReference type="HOGENOM" id="CLU_089696_1_2_9"/>
<dbReference type="OrthoDB" id="517356at2"/>
<dbReference type="BioCyc" id="SCAR396513:SCA_RS08010-MONOMER"/>
<dbReference type="Proteomes" id="UP000000444">
    <property type="component" value="Chromosome"/>
</dbReference>
<dbReference type="GO" id="GO:0005737">
    <property type="term" value="C:cytoplasm"/>
    <property type="evidence" value="ECO:0007669"/>
    <property type="project" value="UniProtKB-SubCell"/>
</dbReference>
<dbReference type="GO" id="GO:0008897">
    <property type="term" value="F:holo-[acyl-carrier-protein] synthase activity"/>
    <property type="evidence" value="ECO:0007669"/>
    <property type="project" value="UniProtKB-UniRule"/>
</dbReference>
<dbReference type="GO" id="GO:0000287">
    <property type="term" value="F:magnesium ion binding"/>
    <property type="evidence" value="ECO:0007669"/>
    <property type="project" value="UniProtKB-UniRule"/>
</dbReference>
<dbReference type="GO" id="GO:0006633">
    <property type="term" value="P:fatty acid biosynthetic process"/>
    <property type="evidence" value="ECO:0007669"/>
    <property type="project" value="UniProtKB-UniRule"/>
</dbReference>
<dbReference type="Gene3D" id="3.90.470.20">
    <property type="entry name" value="4'-phosphopantetheinyl transferase domain"/>
    <property type="match status" value="1"/>
</dbReference>
<dbReference type="HAMAP" id="MF_00101">
    <property type="entry name" value="AcpS"/>
    <property type="match status" value="1"/>
</dbReference>
<dbReference type="InterPro" id="IPR008278">
    <property type="entry name" value="4-PPantetheinyl_Trfase_dom"/>
</dbReference>
<dbReference type="InterPro" id="IPR037143">
    <property type="entry name" value="4-PPantetheinyl_Trfase_dom_sf"/>
</dbReference>
<dbReference type="InterPro" id="IPR002582">
    <property type="entry name" value="ACPS"/>
</dbReference>
<dbReference type="InterPro" id="IPR004568">
    <property type="entry name" value="Ppantetheine-prot_Trfase_dom"/>
</dbReference>
<dbReference type="NCBIfam" id="TIGR00516">
    <property type="entry name" value="acpS"/>
    <property type="match status" value="1"/>
</dbReference>
<dbReference type="NCBIfam" id="TIGR00556">
    <property type="entry name" value="pantethn_trn"/>
    <property type="match status" value="1"/>
</dbReference>
<dbReference type="Pfam" id="PF01648">
    <property type="entry name" value="ACPS"/>
    <property type="match status" value="1"/>
</dbReference>
<dbReference type="SUPFAM" id="SSF56214">
    <property type="entry name" value="4'-phosphopantetheinyl transferase"/>
    <property type="match status" value="1"/>
</dbReference>
<gene>
    <name evidence="1" type="primary">acpS</name>
    <name type="ordered locus">Sca_1577</name>
</gene>
<protein>
    <recommendedName>
        <fullName evidence="1">Holo-[acyl-carrier-protein] synthase</fullName>
        <shortName evidence="1">Holo-ACP synthase</shortName>
        <ecNumber evidence="1">2.7.8.7</ecNumber>
    </recommendedName>
    <alternativeName>
        <fullName evidence="1">4'-phosphopantetheinyl transferase AcpS</fullName>
    </alternativeName>
</protein>